<sequence>MAKAKFERNKPHVNVGTIGHVDHGKTTLTAAISHVLAKTYGGEAKDFSQIDNAPEERERGITINTSHIEYDTPTRHYAHVDCPGHADYVKNMITGAAQMDGAILVVASTDGPMPQTREHILLSRQVGVPFIIVFMNKCDMVDDAELLELVEMEVRELLSEYDFPGDDLPVIQGSALKALEGEPEWEAKIIELAEALDSYIPEPERDIDKPFLMPIEDVFSISGRGTVVTGRVERGIVRVGDEVEIVGIRATTKTTCTGVEMFRKLLDEGRAGENCGILLRGTKRDDVERGQVLSKPGSINPHTTFESEVYVLSKEEGGRHTPFFKGYRPQFYFRTTDVTGTIELPEGVEMVMPGDNIKMKVTLICPIAMDEGLRFAIREGGRTVGAGVVAKIFA</sequence>
<protein>
    <recommendedName>
        <fullName evidence="2">Elongation factor Tu 1</fullName>
        <shortName evidence="2">EF-Tu 1</shortName>
        <ecNumber evidence="2">3.6.5.3</ecNumber>
    </recommendedName>
</protein>
<gene>
    <name evidence="2" type="primary">tuf1</name>
    <name type="ordered locus">Shewmr4_0185</name>
</gene>
<evidence type="ECO:0000250" key="1"/>
<evidence type="ECO:0000255" key="2">
    <source>
        <dbReference type="HAMAP-Rule" id="MF_00118"/>
    </source>
</evidence>
<reference key="1">
    <citation type="submission" date="2006-08" db="EMBL/GenBank/DDBJ databases">
        <title>Complete sequence of Shewanella sp. MR-4.</title>
        <authorList>
            <consortium name="US DOE Joint Genome Institute"/>
            <person name="Copeland A."/>
            <person name="Lucas S."/>
            <person name="Lapidus A."/>
            <person name="Barry K."/>
            <person name="Detter J.C."/>
            <person name="Glavina del Rio T."/>
            <person name="Hammon N."/>
            <person name="Israni S."/>
            <person name="Dalin E."/>
            <person name="Tice H."/>
            <person name="Pitluck S."/>
            <person name="Kiss H."/>
            <person name="Brettin T."/>
            <person name="Bruce D."/>
            <person name="Han C."/>
            <person name="Tapia R."/>
            <person name="Gilna P."/>
            <person name="Schmutz J."/>
            <person name="Larimer F."/>
            <person name="Land M."/>
            <person name="Hauser L."/>
            <person name="Kyrpides N."/>
            <person name="Mikhailova N."/>
            <person name="Nealson K."/>
            <person name="Konstantinidis K."/>
            <person name="Klappenbach J."/>
            <person name="Tiedje J."/>
            <person name="Richardson P."/>
        </authorList>
    </citation>
    <scope>NUCLEOTIDE SEQUENCE [LARGE SCALE GENOMIC DNA]</scope>
    <source>
        <strain>MR-4</strain>
    </source>
</reference>
<comment type="function">
    <text evidence="2">GTP hydrolase that promotes the GTP-dependent binding of aminoacyl-tRNA to the A-site of ribosomes during protein biosynthesis.</text>
</comment>
<comment type="catalytic activity">
    <reaction evidence="2">
        <text>GTP + H2O = GDP + phosphate + H(+)</text>
        <dbReference type="Rhea" id="RHEA:19669"/>
        <dbReference type="ChEBI" id="CHEBI:15377"/>
        <dbReference type="ChEBI" id="CHEBI:15378"/>
        <dbReference type="ChEBI" id="CHEBI:37565"/>
        <dbReference type="ChEBI" id="CHEBI:43474"/>
        <dbReference type="ChEBI" id="CHEBI:58189"/>
        <dbReference type="EC" id="3.6.5.3"/>
    </reaction>
    <physiologicalReaction direction="left-to-right" evidence="2">
        <dbReference type="Rhea" id="RHEA:19670"/>
    </physiologicalReaction>
</comment>
<comment type="subunit">
    <text evidence="2">Monomer.</text>
</comment>
<comment type="subcellular location">
    <subcellularLocation>
        <location evidence="2">Cytoplasm</location>
    </subcellularLocation>
</comment>
<comment type="similarity">
    <text evidence="2">Belongs to the TRAFAC class translation factor GTPase superfamily. Classic translation factor GTPase family. EF-Tu/EF-1A subfamily.</text>
</comment>
<feature type="chain" id="PRO_0000337534" description="Elongation factor Tu 1">
    <location>
        <begin position="1"/>
        <end position="394"/>
    </location>
</feature>
<feature type="domain" description="tr-type G">
    <location>
        <begin position="10"/>
        <end position="204"/>
    </location>
</feature>
<feature type="region of interest" description="G1" evidence="1">
    <location>
        <begin position="19"/>
        <end position="26"/>
    </location>
</feature>
<feature type="region of interest" description="G2" evidence="1">
    <location>
        <begin position="60"/>
        <end position="64"/>
    </location>
</feature>
<feature type="region of interest" description="G3" evidence="1">
    <location>
        <begin position="81"/>
        <end position="84"/>
    </location>
</feature>
<feature type="region of interest" description="G4" evidence="1">
    <location>
        <begin position="136"/>
        <end position="139"/>
    </location>
</feature>
<feature type="region of interest" description="G5" evidence="1">
    <location>
        <begin position="174"/>
        <end position="176"/>
    </location>
</feature>
<feature type="binding site" evidence="2">
    <location>
        <begin position="19"/>
        <end position="26"/>
    </location>
    <ligand>
        <name>GTP</name>
        <dbReference type="ChEBI" id="CHEBI:37565"/>
    </ligand>
</feature>
<feature type="binding site" evidence="2">
    <location>
        <position position="26"/>
    </location>
    <ligand>
        <name>Mg(2+)</name>
        <dbReference type="ChEBI" id="CHEBI:18420"/>
    </ligand>
</feature>
<feature type="binding site" evidence="2">
    <location>
        <begin position="81"/>
        <end position="85"/>
    </location>
    <ligand>
        <name>GTP</name>
        <dbReference type="ChEBI" id="CHEBI:37565"/>
    </ligand>
</feature>
<feature type="binding site" evidence="2">
    <location>
        <begin position="136"/>
        <end position="139"/>
    </location>
    <ligand>
        <name>GTP</name>
        <dbReference type="ChEBI" id="CHEBI:37565"/>
    </ligand>
</feature>
<keyword id="KW-0963">Cytoplasm</keyword>
<keyword id="KW-0251">Elongation factor</keyword>
<keyword id="KW-0342">GTP-binding</keyword>
<keyword id="KW-0378">Hydrolase</keyword>
<keyword id="KW-0460">Magnesium</keyword>
<keyword id="KW-0479">Metal-binding</keyword>
<keyword id="KW-0547">Nucleotide-binding</keyword>
<keyword id="KW-0648">Protein biosynthesis</keyword>
<name>EFTU1_SHESM</name>
<organism>
    <name type="scientific">Shewanella sp. (strain MR-4)</name>
    <dbReference type="NCBI Taxonomy" id="60480"/>
    <lineage>
        <taxon>Bacteria</taxon>
        <taxon>Pseudomonadati</taxon>
        <taxon>Pseudomonadota</taxon>
        <taxon>Gammaproteobacteria</taxon>
        <taxon>Alteromonadales</taxon>
        <taxon>Shewanellaceae</taxon>
        <taxon>Shewanella</taxon>
    </lineage>
</organism>
<accession>Q0HNV1</accession>
<proteinExistence type="inferred from homology"/>
<dbReference type="EC" id="3.6.5.3" evidence="2"/>
<dbReference type="EMBL" id="CP000446">
    <property type="protein sequence ID" value="ABI37266.1"/>
    <property type="molecule type" value="Genomic_DNA"/>
</dbReference>
<dbReference type="RefSeq" id="WP_011621017.1">
    <property type="nucleotide sequence ID" value="NC_008321.1"/>
</dbReference>
<dbReference type="SMR" id="Q0HNV1"/>
<dbReference type="KEGG" id="she:Shewmr4_0185"/>
<dbReference type="HOGENOM" id="CLU_007265_0_1_6"/>
<dbReference type="GO" id="GO:0005829">
    <property type="term" value="C:cytosol"/>
    <property type="evidence" value="ECO:0007669"/>
    <property type="project" value="TreeGrafter"/>
</dbReference>
<dbReference type="GO" id="GO:0005525">
    <property type="term" value="F:GTP binding"/>
    <property type="evidence" value="ECO:0007669"/>
    <property type="project" value="UniProtKB-UniRule"/>
</dbReference>
<dbReference type="GO" id="GO:0003924">
    <property type="term" value="F:GTPase activity"/>
    <property type="evidence" value="ECO:0007669"/>
    <property type="project" value="InterPro"/>
</dbReference>
<dbReference type="GO" id="GO:0097216">
    <property type="term" value="F:guanosine tetraphosphate binding"/>
    <property type="evidence" value="ECO:0007669"/>
    <property type="project" value="UniProtKB-ARBA"/>
</dbReference>
<dbReference type="GO" id="GO:0003746">
    <property type="term" value="F:translation elongation factor activity"/>
    <property type="evidence" value="ECO:0007669"/>
    <property type="project" value="UniProtKB-UniRule"/>
</dbReference>
<dbReference type="CDD" id="cd01884">
    <property type="entry name" value="EF_Tu"/>
    <property type="match status" value="1"/>
</dbReference>
<dbReference type="CDD" id="cd03697">
    <property type="entry name" value="EFTU_II"/>
    <property type="match status" value="1"/>
</dbReference>
<dbReference type="CDD" id="cd03707">
    <property type="entry name" value="EFTU_III"/>
    <property type="match status" value="1"/>
</dbReference>
<dbReference type="FunFam" id="2.40.30.10:FF:000001">
    <property type="entry name" value="Elongation factor Tu"/>
    <property type="match status" value="1"/>
</dbReference>
<dbReference type="FunFam" id="3.40.50.300:FF:000003">
    <property type="entry name" value="Elongation factor Tu"/>
    <property type="match status" value="1"/>
</dbReference>
<dbReference type="Gene3D" id="3.40.50.300">
    <property type="entry name" value="P-loop containing nucleotide triphosphate hydrolases"/>
    <property type="match status" value="1"/>
</dbReference>
<dbReference type="Gene3D" id="2.40.30.10">
    <property type="entry name" value="Translation factors"/>
    <property type="match status" value="2"/>
</dbReference>
<dbReference type="HAMAP" id="MF_00118_B">
    <property type="entry name" value="EF_Tu_B"/>
    <property type="match status" value="1"/>
</dbReference>
<dbReference type="InterPro" id="IPR041709">
    <property type="entry name" value="EF-Tu_GTP-bd"/>
</dbReference>
<dbReference type="InterPro" id="IPR050055">
    <property type="entry name" value="EF-Tu_GTPase"/>
</dbReference>
<dbReference type="InterPro" id="IPR004161">
    <property type="entry name" value="EFTu-like_2"/>
</dbReference>
<dbReference type="InterPro" id="IPR033720">
    <property type="entry name" value="EFTU_2"/>
</dbReference>
<dbReference type="InterPro" id="IPR031157">
    <property type="entry name" value="G_TR_CS"/>
</dbReference>
<dbReference type="InterPro" id="IPR027417">
    <property type="entry name" value="P-loop_NTPase"/>
</dbReference>
<dbReference type="InterPro" id="IPR005225">
    <property type="entry name" value="Small_GTP-bd"/>
</dbReference>
<dbReference type="InterPro" id="IPR000795">
    <property type="entry name" value="T_Tr_GTP-bd_dom"/>
</dbReference>
<dbReference type="InterPro" id="IPR009000">
    <property type="entry name" value="Transl_B-barrel_sf"/>
</dbReference>
<dbReference type="InterPro" id="IPR009001">
    <property type="entry name" value="Transl_elong_EF1A/Init_IF2_C"/>
</dbReference>
<dbReference type="InterPro" id="IPR004541">
    <property type="entry name" value="Transl_elong_EFTu/EF1A_bac/org"/>
</dbReference>
<dbReference type="InterPro" id="IPR004160">
    <property type="entry name" value="Transl_elong_EFTu/EF1A_C"/>
</dbReference>
<dbReference type="NCBIfam" id="TIGR00485">
    <property type="entry name" value="EF-Tu"/>
    <property type="match status" value="1"/>
</dbReference>
<dbReference type="NCBIfam" id="NF000766">
    <property type="entry name" value="PRK00049.1"/>
    <property type="match status" value="1"/>
</dbReference>
<dbReference type="NCBIfam" id="NF009372">
    <property type="entry name" value="PRK12735.1"/>
    <property type="match status" value="1"/>
</dbReference>
<dbReference type="NCBIfam" id="NF009373">
    <property type="entry name" value="PRK12736.1"/>
    <property type="match status" value="1"/>
</dbReference>
<dbReference type="NCBIfam" id="TIGR00231">
    <property type="entry name" value="small_GTP"/>
    <property type="match status" value="1"/>
</dbReference>
<dbReference type="PANTHER" id="PTHR43721:SF22">
    <property type="entry name" value="ELONGATION FACTOR TU, MITOCHONDRIAL"/>
    <property type="match status" value="1"/>
</dbReference>
<dbReference type="PANTHER" id="PTHR43721">
    <property type="entry name" value="ELONGATION FACTOR TU-RELATED"/>
    <property type="match status" value="1"/>
</dbReference>
<dbReference type="Pfam" id="PF00009">
    <property type="entry name" value="GTP_EFTU"/>
    <property type="match status" value="1"/>
</dbReference>
<dbReference type="Pfam" id="PF03144">
    <property type="entry name" value="GTP_EFTU_D2"/>
    <property type="match status" value="1"/>
</dbReference>
<dbReference type="Pfam" id="PF03143">
    <property type="entry name" value="GTP_EFTU_D3"/>
    <property type="match status" value="1"/>
</dbReference>
<dbReference type="PRINTS" id="PR00315">
    <property type="entry name" value="ELONGATNFCT"/>
</dbReference>
<dbReference type="SUPFAM" id="SSF50465">
    <property type="entry name" value="EF-Tu/eEF-1alpha/eIF2-gamma C-terminal domain"/>
    <property type="match status" value="1"/>
</dbReference>
<dbReference type="SUPFAM" id="SSF52540">
    <property type="entry name" value="P-loop containing nucleoside triphosphate hydrolases"/>
    <property type="match status" value="1"/>
</dbReference>
<dbReference type="SUPFAM" id="SSF50447">
    <property type="entry name" value="Translation proteins"/>
    <property type="match status" value="1"/>
</dbReference>
<dbReference type="PROSITE" id="PS00301">
    <property type="entry name" value="G_TR_1"/>
    <property type="match status" value="1"/>
</dbReference>
<dbReference type="PROSITE" id="PS51722">
    <property type="entry name" value="G_TR_2"/>
    <property type="match status" value="1"/>
</dbReference>